<accession>Q9BXB1</accession>
<accession>A6NCH3</accession>
<accession>G5E9B3</accession>
<accession>Q8N537</accession>
<accession>Q9NYD1</accession>
<name>LGR4_HUMAN</name>
<evidence type="ECO:0000250" key="1">
    <source>
        <dbReference type="UniProtKB" id="A2ARI4"/>
    </source>
</evidence>
<evidence type="ECO:0000255" key="2"/>
<evidence type="ECO:0000255" key="3">
    <source>
        <dbReference type="PROSITE-ProRule" id="PRU00521"/>
    </source>
</evidence>
<evidence type="ECO:0000269" key="4">
    <source>
    </source>
</evidence>
<evidence type="ECO:0000269" key="5">
    <source>
    </source>
</evidence>
<evidence type="ECO:0000269" key="6">
    <source>
    </source>
</evidence>
<evidence type="ECO:0000269" key="7">
    <source>
    </source>
</evidence>
<evidence type="ECO:0000269" key="8">
    <source>
    </source>
</evidence>
<evidence type="ECO:0000269" key="9">
    <source>
    </source>
</evidence>
<evidence type="ECO:0000269" key="10">
    <source>
    </source>
</evidence>
<evidence type="ECO:0000269" key="11">
    <source>
    </source>
</evidence>
<evidence type="ECO:0000269" key="12">
    <source>
    </source>
</evidence>
<evidence type="ECO:0000303" key="13">
    <source>
    </source>
</evidence>
<evidence type="ECO:0000305" key="14"/>
<evidence type="ECO:0007744" key="15">
    <source>
    </source>
</evidence>
<evidence type="ECO:0007829" key="16">
    <source>
        <dbReference type="PDB" id="4KT1"/>
    </source>
</evidence>
<evidence type="ECO:0007829" key="17">
    <source>
        <dbReference type="PDB" id="4QXE"/>
    </source>
</evidence>
<evidence type="ECO:0007829" key="18">
    <source>
        <dbReference type="PDB" id="8WVV"/>
    </source>
</evidence>
<evidence type="ECO:0007829" key="19">
    <source>
        <dbReference type="PDB" id="8WVX"/>
    </source>
</evidence>
<evidence type="ECO:0007829" key="20">
    <source>
        <dbReference type="PDB" id="8XFP"/>
    </source>
</evidence>
<evidence type="ECO:0007829" key="21">
    <source>
        <dbReference type="PDB" id="8XFS"/>
    </source>
</evidence>
<evidence type="ECO:0007829" key="22">
    <source>
        <dbReference type="PDB" id="8XFT"/>
    </source>
</evidence>
<evidence type="ECO:0007829" key="23">
    <source>
        <dbReference type="PDB" id="8Y69"/>
    </source>
</evidence>
<keyword id="KW-0002">3D-structure</keyword>
<keyword id="KW-0025">Alternative splicing</keyword>
<keyword id="KW-0090">Biological rhythms</keyword>
<keyword id="KW-1003">Cell membrane</keyword>
<keyword id="KW-0217">Developmental protein</keyword>
<keyword id="KW-0221">Differentiation</keyword>
<keyword id="KW-1015">Disulfide bond</keyword>
<keyword id="KW-0297">G-protein coupled receptor</keyword>
<keyword id="KW-0325">Glycoprotein</keyword>
<keyword id="KW-0391">Immunity</keyword>
<keyword id="KW-0399">Innate immunity</keyword>
<keyword id="KW-0433">Leucine-rich repeat</keyword>
<keyword id="KW-0472">Membrane</keyword>
<keyword id="KW-1285">Osteoporosis</keyword>
<keyword id="KW-0597">Phosphoprotein</keyword>
<keyword id="KW-1267">Proteomics identification</keyword>
<keyword id="KW-0675">Receptor</keyword>
<keyword id="KW-1185">Reference proteome</keyword>
<keyword id="KW-0677">Repeat</keyword>
<keyword id="KW-0732">Signal</keyword>
<keyword id="KW-0744">Spermatogenesis</keyword>
<keyword id="KW-0807">Transducer</keyword>
<keyword id="KW-0812">Transmembrane</keyword>
<keyword id="KW-1133">Transmembrane helix</keyword>
<keyword id="KW-0879">Wnt signaling pathway</keyword>
<protein>
    <recommendedName>
        <fullName>Leucine-rich repeat-containing G-protein coupled receptor 4</fullName>
    </recommendedName>
    <alternativeName>
        <fullName>G-protein coupled receptor 48</fullName>
    </alternativeName>
</protein>
<gene>
    <name type="primary">LGR4</name>
    <name type="synonym">GPR48</name>
</gene>
<feature type="signal peptide" evidence="2">
    <location>
        <begin position="1"/>
        <end position="24"/>
    </location>
</feature>
<feature type="chain" id="PRO_0000012792" description="Leucine-rich repeat-containing G-protein coupled receptor 4">
    <location>
        <begin position="25"/>
        <end position="951"/>
    </location>
</feature>
<feature type="topological domain" description="Extracellular" evidence="2">
    <location>
        <begin position="25"/>
        <end position="544"/>
    </location>
</feature>
<feature type="transmembrane region" description="Helical; Name=1" evidence="2">
    <location>
        <begin position="545"/>
        <end position="565"/>
    </location>
</feature>
<feature type="topological domain" description="Cytoplasmic" evidence="2">
    <location>
        <begin position="566"/>
        <end position="575"/>
    </location>
</feature>
<feature type="transmembrane region" description="Helical; Name=2" evidence="2">
    <location>
        <begin position="576"/>
        <end position="596"/>
    </location>
</feature>
<feature type="topological domain" description="Extracellular" evidence="2">
    <location>
        <begin position="597"/>
        <end position="620"/>
    </location>
</feature>
<feature type="transmembrane region" description="Helical; Name=3" evidence="2">
    <location>
        <begin position="621"/>
        <end position="641"/>
    </location>
</feature>
<feature type="topological domain" description="Cytoplasmic" evidence="2">
    <location>
        <begin position="642"/>
        <end position="661"/>
    </location>
</feature>
<feature type="transmembrane region" description="Helical; Name=4" evidence="2">
    <location>
        <begin position="662"/>
        <end position="682"/>
    </location>
</feature>
<feature type="topological domain" description="Extracellular" evidence="2">
    <location>
        <begin position="683"/>
        <end position="703"/>
    </location>
</feature>
<feature type="transmembrane region" description="Helical; Name=5" evidence="2">
    <location>
        <begin position="704"/>
        <end position="724"/>
    </location>
</feature>
<feature type="topological domain" description="Cytoplasmic" evidence="2">
    <location>
        <begin position="725"/>
        <end position="756"/>
    </location>
</feature>
<feature type="transmembrane region" description="Helical; Name=6" evidence="2">
    <location>
        <begin position="757"/>
        <end position="777"/>
    </location>
</feature>
<feature type="topological domain" description="Extracellular" evidence="2">
    <location>
        <begin position="778"/>
        <end position="783"/>
    </location>
</feature>
<feature type="transmembrane region" description="Helical; Name=7" evidence="2">
    <location>
        <begin position="784"/>
        <end position="804"/>
    </location>
</feature>
<feature type="topological domain" description="Cytoplasmic" evidence="2">
    <location>
        <begin position="805"/>
        <end position="951"/>
    </location>
</feature>
<feature type="domain" description="LRRNT">
    <location>
        <begin position="25"/>
        <end position="57"/>
    </location>
</feature>
<feature type="repeat" description="LRR 1">
    <location>
        <begin position="58"/>
        <end position="79"/>
    </location>
</feature>
<feature type="repeat" description="LRR 2">
    <location>
        <begin position="82"/>
        <end position="103"/>
    </location>
</feature>
<feature type="repeat" description="LRR 3">
    <location>
        <begin position="106"/>
        <end position="127"/>
    </location>
</feature>
<feature type="repeat" description="LRR 4">
    <location>
        <begin position="130"/>
        <end position="151"/>
    </location>
</feature>
<feature type="repeat" description="LRR 5">
    <location>
        <begin position="154"/>
        <end position="177"/>
    </location>
</feature>
<feature type="repeat" description="LRR 6">
    <location>
        <begin position="178"/>
        <end position="199"/>
    </location>
</feature>
<feature type="repeat" description="LRR 7">
    <location>
        <begin position="202"/>
        <end position="223"/>
    </location>
</feature>
<feature type="repeat" description="LRR 8">
    <location>
        <begin position="226"/>
        <end position="247"/>
    </location>
</feature>
<feature type="repeat" description="LRR 9">
    <location>
        <begin position="249"/>
        <end position="270"/>
    </location>
</feature>
<feature type="repeat" description="LRR 10">
    <location>
        <begin position="273"/>
        <end position="294"/>
    </location>
</feature>
<feature type="repeat" description="LRR 11">
    <location>
        <begin position="320"/>
        <end position="341"/>
    </location>
</feature>
<feature type="repeat" description="LRR 12">
    <location>
        <begin position="344"/>
        <end position="365"/>
    </location>
</feature>
<feature type="repeat" description="LRR 13">
    <location>
        <begin position="366"/>
        <end position="387"/>
    </location>
</feature>
<feature type="repeat" description="LRR 14">
    <location>
        <begin position="390"/>
        <end position="411"/>
    </location>
</feature>
<feature type="repeat" description="LRR 15">
    <location>
        <begin position="414"/>
        <end position="435"/>
    </location>
</feature>
<feature type="modified residue" description="Phosphoserine" evidence="15">
    <location>
        <position position="920"/>
    </location>
</feature>
<feature type="glycosylation site" description="N-linked (GlcNAc...) asparagine" evidence="11">
    <location>
        <position position="68"/>
    </location>
</feature>
<feature type="glycosylation site" description="N-linked (GlcNAc...) asparagine" evidence="11">
    <location>
        <position position="199"/>
    </location>
</feature>
<feature type="glycosylation site" description="N-linked (GlcNAc...) asparagine" evidence="2">
    <location>
        <position position="294"/>
    </location>
</feature>
<feature type="glycosylation site" description="N-linked (GlcNAc...) asparagine" evidence="2">
    <location>
        <position position="314"/>
    </location>
</feature>
<feature type="glycosylation site" description="N-linked (GlcNAc...) asparagine" evidence="2">
    <location>
        <position position="505"/>
    </location>
</feature>
<feature type="disulfide bond" evidence="3 11">
    <location>
        <begin position="29"/>
        <end position="35"/>
    </location>
</feature>
<feature type="disulfide bond" evidence="3 11">
    <location>
        <begin position="33"/>
        <end position="43"/>
    </location>
</feature>
<feature type="disulfide bond" evidence="3 11">
    <location>
        <begin position="339"/>
        <end position="364"/>
    </location>
</feature>
<feature type="disulfide bond" evidence="3 11">
    <location>
        <begin position="470"/>
        <end position="522"/>
    </location>
</feature>
<feature type="disulfide bond" evidence="3 11">
    <location>
        <begin position="471"/>
        <end position="476"/>
    </location>
</feature>
<feature type="disulfide bond" evidence="3">
    <location>
        <begin position="618"/>
        <end position="693"/>
    </location>
</feature>
<feature type="splice variant" id="VSP_047136" description="In isoform 2." evidence="13">
    <location>
        <begin position="62"/>
        <end position="85"/>
    </location>
</feature>
<feature type="sequence variant" id="VAR_086463" description="In DPSL; uncertain significance; when transfected in HEK293T cells it results in slightly reduced WNT signaling; decreased protein expression in transfected cells; dbSNP:rs757351670." evidence="12">
    <original>I</original>
    <variation>V</variation>
    <location>
        <position position="96"/>
    </location>
</feature>
<feature type="sequence variant" id="VAR_044528" description="In dbSNP:rs2448010." evidence="4">
    <original>S</original>
    <variation>G</variation>
    <location>
        <position position="215"/>
    </location>
</feature>
<feature type="sequence variant" id="VAR_044529" description="In dbSNP:rs2472617." evidence="4">
    <original>N</original>
    <variation>S</variation>
    <location>
        <position position="233"/>
    </location>
</feature>
<feature type="sequence variant" id="VAR_086464" description="In DPSL; uncertain significance; when transfected in HEK293T cells it results in slightly reduced WNT signaling; decreased protein expression in transfected cells; dbSNP:rs117543292." evidence="12">
    <original>G</original>
    <variation>C</variation>
    <location>
        <position position="363"/>
    </location>
</feature>
<feature type="sequence variant" id="VAR_044530" description="In dbSNP:rs12284579.">
    <original>A</original>
    <variation>V</variation>
    <location>
        <position position="480"/>
    </location>
</feature>
<feature type="sequence variant" id="VAR_044531" description="In dbSNP:rs7125959.">
    <original>R</original>
    <variation>G</variation>
    <location>
        <position position="684"/>
    </location>
</feature>
<feature type="sequence variant" id="VAR_044532" description="In dbSNP:rs34717439.">
    <original>T</original>
    <variation>M</variation>
    <location>
        <position position="709"/>
    </location>
</feature>
<feature type="sequence variant" id="VAR_044533" description="In DPSL; uncertain significance; when transfected in HEK293T cells has no effect on WNT signaling; decreased protein expression in transfected cells; dbSNP:rs34804482." evidence="12">
    <original>D</original>
    <variation>G</variation>
    <location>
        <position position="844"/>
    </location>
</feature>
<feature type="sequence conflict" description="In Ref. 4; AAH33039." evidence="14" ref="4">
    <original>S</original>
    <variation>G</variation>
    <location>
        <position position="22"/>
    </location>
</feature>
<feature type="sequence conflict" description="In Ref. 4; AAH33039." evidence="14" ref="4">
    <original>P</original>
    <variation>H</variation>
    <location>
        <position position="172"/>
    </location>
</feature>
<feature type="sequence conflict" description="In Ref. 1; AAF68989/AAK31153." evidence="14" ref="1">
    <original>L</original>
    <variation>R</variation>
    <location>
        <position position="247"/>
    </location>
</feature>
<feature type="sequence conflict" description="In Ref. 1; AAF68989." evidence="14" ref="1">
    <original>F</original>
    <variation>S</variation>
    <location>
        <position position="292"/>
    </location>
</feature>
<feature type="sequence conflict" description="In Ref. 1; AAF68989." evidence="14" ref="1">
    <original>L</original>
    <variation>P</variation>
    <location>
        <position position="433"/>
    </location>
</feature>
<feature type="sequence conflict" description="In Ref. 1; AAF68989." evidence="14" ref="1">
    <original>L</original>
    <variation>S</variation>
    <location>
        <position position="668"/>
    </location>
</feature>
<feature type="sequence conflict" description="In Ref. 4; AAH33039." evidence="14" ref="4">
    <original>L</original>
    <variation>I</variation>
    <location>
        <position position="681"/>
    </location>
</feature>
<feature type="strand" evidence="19">
    <location>
        <begin position="31"/>
        <end position="33"/>
    </location>
</feature>
<feature type="strand" evidence="17">
    <location>
        <begin position="39"/>
        <end position="42"/>
    </location>
</feature>
<feature type="strand" evidence="17">
    <location>
        <begin position="61"/>
        <end position="63"/>
    </location>
</feature>
<feature type="strand" evidence="23">
    <location>
        <begin position="70"/>
        <end position="72"/>
    </location>
</feature>
<feature type="turn" evidence="17">
    <location>
        <begin position="74"/>
        <end position="79"/>
    </location>
</feature>
<feature type="strand" evidence="17">
    <location>
        <begin position="85"/>
        <end position="87"/>
    </location>
</feature>
<feature type="turn" evidence="17">
    <location>
        <begin position="98"/>
        <end position="103"/>
    </location>
</feature>
<feature type="strand" evidence="17">
    <location>
        <begin position="109"/>
        <end position="111"/>
    </location>
</feature>
<feature type="turn" evidence="17">
    <location>
        <begin position="122"/>
        <end position="127"/>
    </location>
</feature>
<feature type="strand" evidence="17">
    <location>
        <begin position="133"/>
        <end position="135"/>
    </location>
</feature>
<feature type="strand" evidence="21">
    <location>
        <begin position="137"/>
        <end position="139"/>
    </location>
</feature>
<feature type="turn" evidence="17">
    <location>
        <begin position="146"/>
        <end position="151"/>
    </location>
</feature>
<feature type="strand" evidence="17">
    <location>
        <begin position="157"/>
        <end position="159"/>
    </location>
</feature>
<feature type="helix" evidence="17">
    <location>
        <begin position="170"/>
        <end position="173"/>
    </location>
</feature>
<feature type="strand" evidence="17">
    <location>
        <begin position="181"/>
        <end position="183"/>
    </location>
</feature>
<feature type="turn" evidence="17">
    <location>
        <begin position="194"/>
        <end position="199"/>
    </location>
</feature>
<feature type="strand" evidence="17">
    <location>
        <begin position="205"/>
        <end position="207"/>
    </location>
</feature>
<feature type="turn" evidence="17">
    <location>
        <begin position="218"/>
        <end position="223"/>
    </location>
</feature>
<feature type="strand" evidence="17">
    <location>
        <begin position="229"/>
        <end position="231"/>
    </location>
</feature>
<feature type="helix" evidence="17">
    <location>
        <begin position="242"/>
        <end position="246"/>
    </location>
</feature>
<feature type="strand" evidence="17">
    <location>
        <begin position="252"/>
        <end position="254"/>
    </location>
</feature>
<feature type="strand" evidence="18">
    <location>
        <begin position="257"/>
        <end position="259"/>
    </location>
</feature>
<feature type="turn" evidence="17">
    <location>
        <begin position="265"/>
        <end position="270"/>
    </location>
</feature>
<feature type="strand" evidence="17">
    <location>
        <begin position="276"/>
        <end position="278"/>
    </location>
</feature>
<feature type="turn" evidence="17">
    <location>
        <begin position="289"/>
        <end position="294"/>
    </location>
</feature>
<feature type="strand" evidence="17">
    <location>
        <begin position="300"/>
        <end position="304"/>
    </location>
</feature>
<feature type="strand" evidence="17">
    <location>
        <begin position="323"/>
        <end position="329"/>
    </location>
</feature>
<feature type="helix" evidence="17">
    <location>
        <begin position="338"/>
        <end position="341"/>
    </location>
</feature>
<feature type="turn" evidence="17">
    <location>
        <begin position="342"/>
        <end position="344"/>
    </location>
</feature>
<feature type="strand" evidence="17">
    <location>
        <begin position="347"/>
        <end position="349"/>
    </location>
</feature>
<feature type="strand" evidence="17">
    <location>
        <begin position="369"/>
        <end position="371"/>
    </location>
</feature>
<feature type="turn" evidence="16">
    <location>
        <begin position="382"/>
        <end position="387"/>
    </location>
</feature>
<feature type="strand" evidence="17">
    <location>
        <begin position="393"/>
        <end position="395"/>
    </location>
</feature>
<feature type="turn" evidence="16">
    <location>
        <begin position="406"/>
        <end position="411"/>
    </location>
</feature>
<feature type="strand" evidence="16">
    <location>
        <begin position="417"/>
        <end position="419"/>
    </location>
</feature>
<feature type="strand" evidence="16">
    <location>
        <begin position="437"/>
        <end position="440"/>
    </location>
</feature>
<feature type="helix" evidence="16">
    <location>
        <begin position="453"/>
        <end position="456"/>
    </location>
</feature>
<feature type="strand" evidence="16">
    <location>
        <begin position="461"/>
        <end position="463"/>
    </location>
</feature>
<feature type="helix" evidence="16">
    <location>
        <begin position="467"/>
        <end position="470"/>
    </location>
</feature>
<feature type="turn" evidence="16">
    <location>
        <begin position="471"/>
        <end position="473"/>
    </location>
</feature>
<feature type="strand" evidence="16">
    <location>
        <begin position="521"/>
        <end position="523"/>
    </location>
</feature>
<feature type="turn" evidence="21">
    <location>
        <begin position="527"/>
        <end position="529"/>
    </location>
</feature>
<feature type="strand" evidence="18">
    <location>
        <begin position="535"/>
        <end position="538"/>
    </location>
</feature>
<feature type="helix" evidence="21">
    <location>
        <begin position="539"/>
        <end position="564"/>
    </location>
</feature>
<feature type="helix" evidence="21">
    <location>
        <begin position="572"/>
        <end position="600"/>
    </location>
</feature>
<feature type="strand" evidence="21">
    <location>
        <begin position="601"/>
        <end position="603"/>
    </location>
</feature>
<feature type="helix" evidence="21">
    <location>
        <begin position="605"/>
        <end position="612"/>
    </location>
</feature>
<feature type="helix" evidence="21">
    <location>
        <begin position="616"/>
        <end position="648"/>
    </location>
</feature>
<feature type="helix" evidence="21">
    <location>
        <begin position="658"/>
        <end position="682"/>
    </location>
</feature>
<feature type="strand" evidence="20">
    <location>
        <begin position="683"/>
        <end position="686"/>
    </location>
</feature>
<feature type="helix" evidence="20">
    <location>
        <begin position="687"/>
        <end position="689"/>
    </location>
</feature>
<feature type="turn" evidence="21">
    <location>
        <begin position="695"/>
        <end position="697"/>
    </location>
</feature>
<feature type="strand" evidence="21">
    <location>
        <begin position="704"/>
        <end position="706"/>
    </location>
</feature>
<feature type="helix" evidence="21">
    <location>
        <begin position="707"/>
        <end position="731"/>
    </location>
</feature>
<feature type="helix" evidence="23">
    <location>
        <begin position="740"/>
        <end position="742"/>
    </location>
</feature>
<feature type="helix" evidence="21">
    <location>
        <begin position="743"/>
        <end position="767"/>
    </location>
</feature>
<feature type="turn" evidence="21">
    <location>
        <begin position="769"/>
        <end position="771"/>
    </location>
</feature>
<feature type="strand" evidence="22">
    <location>
        <begin position="773"/>
        <end position="775"/>
    </location>
</feature>
<feature type="helix" evidence="21">
    <location>
        <begin position="779"/>
        <end position="789"/>
    </location>
</feature>
<feature type="helix" evidence="21">
    <location>
        <begin position="792"/>
        <end position="804"/>
    </location>
</feature>
<feature type="helix" evidence="21">
    <location>
        <begin position="806"/>
        <end position="820"/>
    </location>
</feature>
<comment type="function">
    <text evidence="1 5 6 7 8 9 11">Receptor for R-spondins that potentiates the canonical Wnt signaling pathway and is involved in the formation of various organs. Upon binding to R-spondins (RSPO1, RSPO2, RSPO3 or RSPO4), associates with phosphorylated LRP6 and frizzled receptors that are activated by extracellular Wnt receptors, triggering the canonical Wnt signaling pathway to increase expression of target genes. In contrast to classical G-protein coupled receptors, does not activate heterotrimeric G-proteins to transduce the signal. Its function as activator of the Wnt signaling pathway is required for the development of various organs, including liver, kidney, intestine, bone, reproductive tract and eye. May also act as a receptor for norrin (NDP), such results however require additional confirmation in vivo. Required during spermatogenesis to activate the Wnt signaling pathway in peritubular myoid cells. Required for the maintenance of intestinal stem cells and Paneth cell differentiation in postnatal intestinal crypts. Acts as a regulator of bone formation and remodeling. Involved in kidney development; required for maintaining the ureteric bud in an undifferentiated state. Involved in the development of the anterior segment of the eye. Required during erythropoiesis. Also acts as a negative regulator of innate immunity by inhibiting TLR2/TLR4 associated pattern-recognition and pro-inflammatory cytokine production. Plays an important role in regulating the circadian rhythms of plasma lipids, partially through regulating the rhythmic expression of MTTP (By similarity). Required for proper development of GnRH neurons (gonadotropin-releasing hormone expressing neurons) that control the release of reproductive hormones from the pituitary gland (By similarity).</text>
</comment>
<comment type="interaction">
    <interactant intactId="EBI-10965764">
        <id>Q9BXB1</id>
    </interactant>
    <interactant intactId="EBI-949772">
        <id>Q9ULT6</id>
        <label>ZNRF3</label>
    </interactant>
    <organismsDiffer>false</organismsDiffer>
    <experiments>2</experiments>
</comment>
<comment type="interaction">
    <interactant intactId="EBI-17443382">
        <id>Q9BXB1-2</id>
    </interactant>
    <interactant intactId="EBI-10317612">
        <id>Q9P0N8</id>
        <label>MARCHF2</label>
    </interactant>
    <organismsDiffer>false</organismsDiffer>
    <experiments>3</experiments>
</comment>
<comment type="subcellular location">
    <subcellularLocation>
        <location evidence="5 8">Cell membrane</location>
        <topology evidence="5 8">Multi-pass membrane protein</topology>
    </subcellularLocation>
</comment>
<comment type="alternative products">
    <event type="alternative splicing"/>
    <isoform>
        <id>Q9BXB1-1</id>
        <name>1</name>
        <sequence type="displayed"/>
    </isoform>
    <isoform>
        <id>Q9BXB1-2</id>
        <name>2</name>
        <sequence type="described" ref="VSP_047136"/>
    </isoform>
</comment>
<comment type="tissue specificity">
    <text>Expressed in multiple steroidogenic tissues: placenta, ovary, testis and adrenal. Expressed also in spinal cord, thyroid, stomach, trachea, heart, pancreas, kidney, prostate and spleen.</text>
</comment>
<comment type="polymorphism">
    <text evidence="10">Genetic variations in LGR4 define the bone mineral density quantitative trait locus 17 (BMND17) [MIM:615311]. Variance in bone mineral density influences bone mass, contributes to size determination in the general population, and is a susceptibility factor for osteoporotic fractures.</text>
</comment>
<comment type="disease" evidence="10">
    <disease id="DI-02659">
        <name>Osteoporosis</name>
        <acronym>OSTEOP</acronym>
        <description>A systemic skeletal disorder characterized by decreased bone mass and deterioration of bone microarchitecture without alteration in the composition of bone. The result is fragile bones and an increased risk of fractures, even after minimal trauma. Osteoporosis is a chronic condition of multifactorial etiology and is usually clinically silent until a fracture occurs.</description>
        <dbReference type="MIM" id="166710"/>
    </disease>
    <text evidence="10">Disease susceptibility may be associated with variants affecting the gene represented in this entry. A LGR4 nonsense mutation creating a stop codon after position 126 (c.376C&gt;T) is strongly associated with low bone mineral density and osteoporotic fractures (PubMed:23644456). This mutation probably causes degradation of the transcript by nonsense-mediated decay (NMD). The c.376C&gt;T mutation is also associated with electrolyte imbalance, late onset of menarche and reduced testosterone levels, as well as an increased risk of squamous cell carcinoma of the skin and biliary tract cancer (PubMed:23644456).</text>
</comment>
<comment type="disease" evidence="12">
    <disease id="DI-06269">
        <name>Delayed puberty, self-limited</name>
        <acronym>DPSL</acronym>
        <description>A condition defined as the absence of testicular enlargement in boys or breast development in girls at an age that is 2-2.5 SD later than the population mean. DPSL is often familial and is highly heritable, most commonly seen with an autosomal dominant inheritance pattern.</description>
        <dbReference type="MIM" id="619613"/>
    </disease>
    <text>The disease may be caused by variants affecting the gene represented in this entry.</text>
</comment>
<comment type="similarity">
    <text evidence="3">Belongs to the G-protein coupled receptor 1 family.</text>
</comment>
<sequence length="951" mass="104475">MPGPLGLLCFLALGLLGSAGPSGAAPPLCAAPCSCDGDRRVDCSGKGLTAVPEGLSAFTQALDISMNNITQLPEDAFKNFPFLEELQLAGNDLSFIHPKALSGLKELKVLTLQNNQLKTVPSEAIRGLSALQSLRLDANHITSVPEDSFEGLVQLRHLWLDDNSLTEVPVHPLSNLPTLQALTLALNKISSIPDFAFTNLSSLVVLHLHNNKIRSLSQHCFDGLDNLETLDLNYNNLGEFPQAIKALPSLKELGFHSNSISVIPDGAFDGNPLLRTIHLYDNPLSFVGNSAFHNLSDLHSLVIRGASMVQQFPNLTGTVHLESLTLTGTKISSIPNNLCQEQKMLRTLDLSYNNIRDLPSFNGCHALEEISLQRNQIYQIKEGTFQGLISLRILDLSRNLIHEIHSRAFATLGPITNLDVSFNELTSFPTEGLNGLNQLKLVGNFKLKEALAAKDFVNLRSLSVPYAYQCCAFWGCDSYANLNTEDNSLQDHSVAQEKGTADAANVTSTLENEEHSQIIIHCTPSTGAFKPCEYLLGSWMIRLTVWFIFLVALFFNLLVILTTFASCTSLPSSKLFIGLISVSNLFMGIYTGILTFLDAVSWGRFAEFGIWWETGSGCKVAGFLAVFSSESAIFLLMLATVERSLSAKDIMKNGKSNHLKQFRVAALLAFLGATVAGCFPLFHRGEYSASPLCLPFPTGETPSLGFTVTLVLLNSLAFLLMAVIYTKLYCNLEKEDLSENSQSSMIKHVAWLIFTNCIFFCPVAFFSFAPLITAISISPEIMKSVTLIFFPLPACLNPVLYVFFNPKFKEDWKLLKRRVTKKSGSVSVSISSQGGCLEQDFYYDCGMYSHLQGNLTVCDCCESFLLTKPVSCKHLIKSHSCPALAVASCQRPEGYWSDCGTQSAHSDYADEEDSFVSDSSDQVQACGRACFYQSRGFPLVRYAYNLPRVKD</sequence>
<reference key="1">
    <citation type="journal article" date="2001" name="Biochem. Biophys. Res. Commun.">
        <title>Molecular characterization of a novel glycoprotein hormone G-protein-coupled receptor.</title>
        <authorList>
            <person name="Loh E.D."/>
            <person name="Broussard S.R."/>
            <person name="Kolakowski L.F. Jr."/>
        </authorList>
    </citation>
    <scope>NUCLEOTIDE SEQUENCE [GENOMIC DNA / MRNA] (ISOFORM 1)</scope>
    <scope>VARIANTS GLY-215 AND SER-233</scope>
    <source>
        <tissue>Pancreas</tissue>
    </source>
</reference>
<reference key="2">
    <citation type="journal article" date="2006" name="Nature">
        <title>Human chromosome 11 DNA sequence and analysis including novel gene identification.</title>
        <authorList>
            <person name="Taylor T.D."/>
            <person name="Noguchi H."/>
            <person name="Totoki Y."/>
            <person name="Toyoda A."/>
            <person name="Kuroki Y."/>
            <person name="Dewar K."/>
            <person name="Lloyd C."/>
            <person name="Itoh T."/>
            <person name="Takeda T."/>
            <person name="Kim D.-W."/>
            <person name="She X."/>
            <person name="Barlow K.F."/>
            <person name="Bloom T."/>
            <person name="Bruford E."/>
            <person name="Chang J.L."/>
            <person name="Cuomo C.A."/>
            <person name="Eichler E."/>
            <person name="FitzGerald M.G."/>
            <person name="Jaffe D.B."/>
            <person name="LaButti K."/>
            <person name="Nicol R."/>
            <person name="Park H.-S."/>
            <person name="Seaman C."/>
            <person name="Sougnez C."/>
            <person name="Yang X."/>
            <person name="Zimmer A.R."/>
            <person name="Zody M.C."/>
            <person name="Birren B.W."/>
            <person name="Nusbaum C."/>
            <person name="Fujiyama A."/>
            <person name="Hattori M."/>
            <person name="Rogers J."/>
            <person name="Lander E.S."/>
            <person name="Sakaki Y."/>
        </authorList>
    </citation>
    <scope>NUCLEOTIDE SEQUENCE [LARGE SCALE GENOMIC DNA]</scope>
</reference>
<reference key="3">
    <citation type="submission" date="2005-09" db="EMBL/GenBank/DDBJ databases">
        <authorList>
            <person name="Mural R.J."/>
            <person name="Istrail S."/>
            <person name="Sutton G.G."/>
            <person name="Florea L."/>
            <person name="Halpern A.L."/>
            <person name="Mobarry C.M."/>
            <person name="Lippert R."/>
            <person name="Walenz B."/>
            <person name="Shatkay H."/>
            <person name="Dew I."/>
            <person name="Miller J.R."/>
            <person name="Flanigan M.J."/>
            <person name="Edwards N.J."/>
            <person name="Bolanos R."/>
            <person name="Fasulo D."/>
            <person name="Halldorsson B.V."/>
            <person name="Hannenhalli S."/>
            <person name="Turner R."/>
            <person name="Yooseph S."/>
            <person name="Lu F."/>
            <person name="Nusskern D.R."/>
            <person name="Shue B.C."/>
            <person name="Zheng X.H."/>
            <person name="Zhong F."/>
            <person name="Delcher A.L."/>
            <person name="Huson D.H."/>
            <person name="Kravitz S.A."/>
            <person name="Mouchard L."/>
            <person name="Reinert K."/>
            <person name="Remington K.A."/>
            <person name="Clark A.G."/>
            <person name="Waterman M.S."/>
            <person name="Eichler E.E."/>
            <person name="Adams M.D."/>
            <person name="Hunkapiller M.W."/>
            <person name="Myers E.W."/>
            <person name="Venter J.C."/>
        </authorList>
    </citation>
    <scope>NUCLEOTIDE SEQUENCE [LARGE SCALE GENOMIC DNA]</scope>
</reference>
<reference key="4">
    <citation type="journal article" date="2004" name="Genome Res.">
        <title>The status, quality, and expansion of the NIH full-length cDNA project: the Mammalian Gene Collection (MGC).</title>
        <authorList>
            <consortium name="The MGC Project Team"/>
        </authorList>
    </citation>
    <scope>NUCLEOTIDE SEQUENCE [LARGE SCALE MRNA] (ISOFORM 2)</scope>
    <source>
        <tissue>Brain</tissue>
    </source>
</reference>
<reference key="5">
    <citation type="journal article" date="2011" name="EMBO Rep.">
        <title>LGR4 and LGR5 are R-spondin receptors mediating Wnt/beta-catenin and Wnt/PCP signalling.</title>
        <authorList>
            <person name="Glinka A."/>
            <person name="Dolde C."/>
            <person name="Kirsch N."/>
            <person name="Huang Y.L."/>
            <person name="Kazanskaya O."/>
            <person name="Ingelfinger D."/>
            <person name="Boutros M."/>
            <person name="Cruciat C.M."/>
            <person name="Niehrs C."/>
        </authorList>
    </citation>
    <scope>FUNCTION</scope>
    <scope>INTERACTION WITH RSPO1; RSPO2; RSPO3 AND RSPO4</scope>
</reference>
<reference key="6">
    <citation type="journal article" date="2011" name="Nature">
        <title>Lgr5 homologues associate with Wnt receptors and mediate R-spondin signalling.</title>
        <authorList>
            <person name="de Lau W."/>
            <person name="Barker N."/>
            <person name="Low T.Y."/>
            <person name="Koo B.K."/>
            <person name="Li V.S."/>
            <person name="Teunissen H."/>
            <person name="Kujala P."/>
            <person name="Haegebarth A."/>
            <person name="Peters P.J."/>
            <person name="van de Wetering M."/>
            <person name="Stange D.E."/>
            <person name="van Es J.E."/>
            <person name="Guardavaccaro D."/>
            <person name="Schasfoort R.B."/>
            <person name="Mohri Y."/>
            <person name="Nishimori K."/>
            <person name="Mohammed S."/>
            <person name="Heck A.J."/>
            <person name="Clevers H."/>
        </authorList>
    </citation>
    <scope>FUNCTION</scope>
    <scope>INTERACTION WITH RSPO1; RSPO2; RSPO3 AND RSPO4</scope>
</reference>
<reference key="7">
    <citation type="journal article" date="2011" name="Proc. Natl. Acad. Sci. U.S.A.">
        <title>R-spondins function as ligands of the orphan receptors LGR4 and LGR5 to regulate Wnt/beta-catenin signaling.</title>
        <authorList>
            <person name="Carmon K.S."/>
            <person name="Gong X."/>
            <person name="Lin Q."/>
            <person name="Thomas A."/>
            <person name="Liu Q."/>
        </authorList>
    </citation>
    <scope>FUNCTION</scope>
    <scope>SUBCELLULAR LOCATION</scope>
    <scope>INTERACTION WITH RSPO1; RSPO2; RSPO3 AND RSPO4</scope>
</reference>
<reference key="8">
    <citation type="journal article" date="2012" name="PLoS ONE">
        <title>R-Spondin potentiates Wnt/beta-catenin signaling through orphan receptors LGR4 and LGR5.</title>
        <authorList>
            <person name="Ruffner H."/>
            <person name="Sprunger J."/>
            <person name="Charlat O."/>
            <person name="Leighton-Davies J."/>
            <person name="Grosshans B."/>
            <person name="Salathe A."/>
            <person name="Zietzling S."/>
            <person name="Beck V."/>
            <person name="Therier M."/>
            <person name="Isken A."/>
            <person name="Xie Y."/>
            <person name="Zhang Y."/>
            <person name="Hao H."/>
            <person name="Shi X."/>
            <person name="Liu D."/>
            <person name="Song Q."/>
            <person name="Clay I."/>
            <person name="Hintzen G."/>
            <person name="Tchorz J."/>
            <person name="Bouchez L.C."/>
            <person name="Michaud G."/>
            <person name="Finan P."/>
            <person name="Myer V.E."/>
            <person name="Bouwmeester T."/>
            <person name="Porter J."/>
            <person name="Hild M."/>
            <person name="Bassilana F."/>
            <person name="Parker C.N."/>
            <person name="Cong F."/>
        </authorList>
    </citation>
    <scope>FUNCTION</scope>
    <scope>SUBCELLULAR LOCATION</scope>
    <scope>INTERACTION WITH RSPO1</scope>
</reference>
<reference key="9">
    <citation type="journal article" date="2013" name="J. Cell Sci.">
        <title>Multi-functional norrin is a ligand for the LGR4 receptor.</title>
        <authorList>
            <person name="Deng C."/>
            <person name="Reddy P."/>
            <person name="Cheng Y."/>
            <person name="Luo C.W."/>
            <person name="Hsiao C.L."/>
            <person name="Hsueh A.J."/>
        </authorList>
    </citation>
    <scope>FUNCTION</scope>
</reference>
<reference key="10">
    <citation type="journal article" date="2013" name="Nature">
        <title>Nonsense mutation in the LGR4 gene is associated with several human diseases and other traits.</title>
        <authorList>
            <person name="Styrkarsdottir U."/>
            <person name="Thorleifsson G."/>
            <person name="Sulem P."/>
            <person name="Gudbjartsson D.F."/>
            <person name="Sigurdsson A."/>
            <person name="Jonasdottir A."/>
            <person name="Jonasdottir A."/>
            <person name="Oddsson A."/>
            <person name="Helgason A."/>
            <person name="Magnusson O.T."/>
            <person name="Walters G.B."/>
            <person name="Frigge M.L."/>
            <person name="Helgadottir H.T."/>
            <person name="Johannsdottir H."/>
            <person name="Bergsteinsdottir K."/>
            <person name="Ogmundsdottir M.H."/>
            <person name="Center J.R."/>
            <person name="Nguyen T.V."/>
            <person name="Eisman J.A."/>
            <person name="Christiansen C."/>
            <person name="Steingrimsson E."/>
            <person name="Jonasson J.G."/>
            <person name="Tryggvadottir L."/>
            <person name="Eyjolfsson G.I."/>
            <person name="Theodors A."/>
            <person name="Jonsson T."/>
            <person name="Ingvarsson T."/>
            <person name="Olafsson I."/>
            <person name="Rafnar T."/>
            <person name="Kong A."/>
            <person name="Sigurdsson G."/>
            <person name="Masson G."/>
            <person name="Thorsteinsdottir U."/>
            <person name="Stefansson K."/>
        </authorList>
    </citation>
    <scope>POLYMORPHISM</scope>
    <scope>INVOLVEMENT IN OSTEOP</scope>
    <scope>INVOLVEMENT IN BMND17</scope>
</reference>
<reference key="11">
    <citation type="journal article" date="2014" name="J. Proteomics">
        <title>An enzyme assisted RP-RPLC approach for in-depth analysis of human liver phosphoproteome.</title>
        <authorList>
            <person name="Bian Y."/>
            <person name="Song C."/>
            <person name="Cheng K."/>
            <person name="Dong M."/>
            <person name="Wang F."/>
            <person name="Huang J."/>
            <person name="Sun D."/>
            <person name="Wang L."/>
            <person name="Ye M."/>
            <person name="Zou H."/>
        </authorList>
    </citation>
    <scope>PHOSPHORYLATION [LARGE SCALE ANALYSIS] AT SER-920</scope>
    <scope>IDENTIFICATION BY MASS SPECTROMETRY [LARGE SCALE ANALYSIS]</scope>
    <source>
        <tissue>Liver</tissue>
    </source>
</reference>
<reference key="12">
    <citation type="journal article" date="2013" name="Genes Dev.">
        <title>Structural basis for R-spondin recognition by LGR4/5/6 receptors.</title>
        <authorList>
            <person name="Wang D."/>
            <person name="Huang B."/>
            <person name="Zhang S."/>
            <person name="Yu X."/>
            <person name="Wu W."/>
            <person name="Wang X."/>
        </authorList>
    </citation>
    <scope>X-RAY CRYSTALLOGRAPHY (2.5 ANGSTROMS) OF 26-527 IN COMPLEX WITH RSPO1</scope>
    <scope>FUNCTION</scope>
    <scope>GLYCOSYLATION AT ASN-68 AND ASN-199</scope>
    <scope>DISULFIDE BONDS</scope>
</reference>
<reference key="13">
    <citation type="journal article" date="2020" name="JCI Insight">
        <title>LGR4 deficiency results in delayed puberty through impaired Wnt/beta-catenin signaling.</title>
        <authorList>
            <person name="Mancini A."/>
            <person name="Howard S.R."/>
            <person name="Marelli F."/>
            <person name="Cabrera C.P."/>
            <person name="Barnes M.R."/>
            <person name="Sternberg M.J."/>
            <person name="Leprovots M."/>
            <person name="Hadjidemetriou I."/>
            <person name="Monti E."/>
            <person name="David A."/>
            <person name="Wehkalampi K."/>
            <person name="Oleari R."/>
            <person name="Lettieri A."/>
            <person name="Vezzoli V."/>
            <person name="Vassart G."/>
            <person name="Cariboni A."/>
            <person name="Bonomi M."/>
            <person name="Garcia M.I."/>
            <person name="Guasti L."/>
            <person name="Dunkel L."/>
        </authorList>
    </citation>
    <scope>VARIANTS DPSL VAL-96; CYS-363 AND GLY-844</scope>
    <scope>INVOLVEMENT IN DPSL</scope>
    <scope>CHARACTERIZATION OF VARIANTS DPSL VAL-96; CYS-363 AND GLY-844</scope>
</reference>
<dbReference type="EMBL" id="AF346711">
    <property type="protein sequence ID" value="AAK31153.1"/>
    <property type="molecule type" value="Genomic_DNA"/>
</dbReference>
<dbReference type="EMBL" id="AF346709">
    <property type="protein sequence ID" value="AAK31153.1"/>
    <property type="status" value="JOINED"/>
    <property type="molecule type" value="Genomic_DNA"/>
</dbReference>
<dbReference type="EMBL" id="AF346710">
    <property type="protein sequence ID" value="AAK31153.1"/>
    <property type="status" value="JOINED"/>
    <property type="molecule type" value="Genomic_DNA"/>
</dbReference>
<dbReference type="EMBL" id="AF257182">
    <property type="protein sequence ID" value="AAF68989.1"/>
    <property type="molecule type" value="mRNA"/>
</dbReference>
<dbReference type="EMBL" id="AC090597">
    <property type="status" value="NOT_ANNOTATED_CDS"/>
    <property type="molecule type" value="Genomic_DNA"/>
</dbReference>
<dbReference type="EMBL" id="AC100771">
    <property type="status" value="NOT_ANNOTATED_CDS"/>
    <property type="molecule type" value="Genomic_DNA"/>
</dbReference>
<dbReference type="EMBL" id="CH471064">
    <property type="protein sequence ID" value="EAW68285.1"/>
    <property type="molecule type" value="Genomic_DNA"/>
</dbReference>
<dbReference type="EMBL" id="CH471064">
    <property type="protein sequence ID" value="EAW68286.1"/>
    <property type="molecule type" value="Genomic_DNA"/>
</dbReference>
<dbReference type="EMBL" id="BC033039">
    <property type="protein sequence ID" value="AAH33039.1"/>
    <property type="molecule type" value="mRNA"/>
</dbReference>
<dbReference type="CCDS" id="CCDS31449.1">
    <molecule id="Q9BXB1-1"/>
</dbReference>
<dbReference type="CCDS" id="CCDS86187.1">
    <molecule id="Q9BXB1-2"/>
</dbReference>
<dbReference type="RefSeq" id="NP_001333361.1">
    <molecule id="Q9BXB1-2"/>
    <property type="nucleotide sequence ID" value="NM_001346432.2"/>
</dbReference>
<dbReference type="RefSeq" id="NP_060960.2">
    <molecule id="Q9BXB1-1"/>
    <property type="nucleotide sequence ID" value="NM_018490.5"/>
</dbReference>
<dbReference type="PDB" id="4KT1">
    <property type="method" value="X-ray"/>
    <property type="resolution" value="2.50 A"/>
    <property type="chains" value="A=26-527"/>
</dbReference>
<dbReference type="PDB" id="4QXE">
    <property type="method" value="X-ray"/>
    <property type="resolution" value="2.20 A"/>
    <property type="chains" value="A=27-396"/>
</dbReference>
<dbReference type="PDB" id="4QXF">
    <property type="method" value="X-ray"/>
    <property type="resolution" value="2.25 A"/>
    <property type="chains" value="A/B=27-252"/>
</dbReference>
<dbReference type="PDB" id="8WVU">
    <property type="method" value="EM"/>
    <property type="resolution" value="3.61 A"/>
    <property type="chains" value="A=24-832"/>
</dbReference>
<dbReference type="PDB" id="8WVV">
    <property type="method" value="EM"/>
    <property type="resolution" value="3.35 A"/>
    <property type="chains" value="A=24-832"/>
</dbReference>
<dbReference type="PDB" id="8WVW">
    <property type="method" value="EM"/>
    <property type="resolution" value="3.53 A"/>
    <property type="chains" value="A=24-832"/>
</dbReference>
<dbReference type="PDB" id="8WVX">
    <property type="method" value="EM"/>
    <property type="resolution" value="3.32 A"/>
    <property type="chains" value="A/B=24-832"/>
</dbReference>
<dbReference type="PDB" id="8WVY">
    <property type="method" value="EM"/>
    <property type="resolution" value="3.29 A"/>
    <property type="chains" value="A=24-832"/>
</dbReference>
<dbReference type="PDB" id="8XFP">
    <property type="method" value="EM"/>
    <property type="resolution" value="3.21 A"/>
    <property type="chains" value="A=1-951"/>
</dbReference>
<dbReference type="PDB" id="8XFS">
    <property type="method" value="EM"/>
    <property type="resolution" value="3.20 A"/>
    <property type="chains" value="A=31-821"/>
</dbReference>
<dbReference type="PDB" id="8XFT">
    <property type="method" value="EM"/>
    <property type="resolution" value="3.24 A"/>
    <property type="chains" value="A=1-951"/>
</dbReference>
<dbReference type="PDB" id="8XT9">
    <property type="method" value="EM"/>
    <property type="resolution" value="3.10 A"/>
    <property type="chains" value="C=1-951"/>
</dbReference>
<dbReference type="PDB" id="8XUM">
    <property type="method" value="EM"/>
    <property type="resolution" value="2.90 A"/>
    <property type="chains" value="A=1-951"/>
</dbReference>
<dbReference type="PDB" id="8Y69">
    <property type="method" value="EM"/>
    <property type="resolution" value="3.38 A"/>
    <property type="chains" value="A/D=33-820"/>
</dbReference>
<dbReference type="PDBsum" id="4KT1"/>
<dbReference type="PDBsum" id="4QXE"/>
<dbReference type="PDBsum" id="4QXF"/>
<dbReference type="PDBsum" id="8WVU"/>
<dbReference type="PDBsum" id="8WVV"/>
<dbReference type="PDBsum" id="8WVW"/>
<dbReference type="PDBsum" id="8WVX"/>
<dbReference type="PDBsum" id="8WVY"/>
<dbReference type="PDBsum" id="8XFP"/>
<dbReference type="PDBsum" id="8XFS"/>
<dbReference type="PDBsum" id="8XFT"/>
<dbReference type="PDBsum" id="8XT9"/>
<dbReference type="PDBsum" id="8XUM"/>
<dbReference type="PDBsum" id="8Y69"/>
<dbReference type="EMDB" id="EMD-37869"/>
<dbReference type="EMDB" id="EMD-37873"/>
<dbReference type="EMDB" id="EMD-37874"/>
<dbReference type="EMDB" id="EMD-37875"/>
<dbReference type="EMDB" id="EMD-37876"/>
<dbReference type="EMDB" id="EMD-38307"/>
<dbReference type="EMDB" id="EMD-38308"/>
<dbReference type="EMDB" id="EMD-38309"/>
<dbReference type="EMDB" id="EMD-38641"/>
<dbReference type="EMDB" id="EMD-38677"/>
<dbReference type="EMDB" id="EMD-38982"/>
<dbReference type="SMR" id="Q9BXB1"/>
<dbReference type="BioGRID" id="120644">
    <property type="interactions" value="280"/>
</dbReference>
<dbReference type="CORUM" id="Q9BXB1"/>
<dbReference type="DIP" id="DIP-59894N"/>
<dbReference type="FunCoup" id="Q9BXB1">
    <property type="interactions" value="1471"/>
</dbReference>
<dbReference type="IntAct" id="Q9BXB1">
    <property type="interactions" value="57"/>
</dbReference>
<dbReference type="STRING" id="9606.ENSP00000368516"/>
<dbReference type="GuidetoPHARMACOLOGY" id="147"/>
<dbReference type="GlyCosmos" id="Q9BXB1">
    <property type="glycosylation" value="5 sites, No reported glycans"/>
</dbReference>
<dbReference type="GlyGen" id="Q9BXB1">
    <property type="glycosylation" value="7 sites, 5 N-linked glycans (4 sites)"/>
</dbReference>
<dbReference type="iPTMnet" id="Q9BXB1"/>
<dbReference type="PhosphoSitePlus" id="Q9BXB1"/>
<dbReference type="SwissPalm" id="Q9BXB1"/>
<dbReference type="BioMuta" id="LGR4"/>
<dbReference type="DMDM" id="212286375"/>
<dbReference type="jPOST" id="Q9BXB1"/>
<dbReference type="MassIVE" id="Q9BXB1"/>
<dbReference type="PaxDb" id="9606-ENSP00000368516"/>
<dbReference type="PeptideAtlas" id="Q9BXB1"/>
<dbReference type="ProteomicsDB" id="33888"/>
<dbReference type="ProteomicsDB" id="79397">
    <molecule id="Q9BXB1-1"/>
</dbReference>
<dbReference type="ABCD" id="Q9BXB1">
    <property type="antibodies" value="2 sequenced antibodies"/>
</dbReference>
<dbReference type="Antibodypedia" id="12720">
    <property type="antibodies" value="418 antibodies from 33 providers"/>
</dbReference>
<dbReference type="DNASU" id="55366"/>
<dbReference type="Ensembl" id="ENST00000379214.9">
    <molecule id="Q9BXB1-1"/>
    <property type="protein sequence ID" value="ENSP00000368516.4"/>
    <property type="gene ID" value="ENSG00000205213.14"/>
</dbReference>
<dbReference type="Ensembl" id="ENST00000389858.4">
    <molecule id="Q9BXB1-2"/>
    <property type="protein sequence ID" value="ENSP00000374508.4"/>
    <property type="gene ID" value="ENSG00000205213.14"/>
</dbReference>
<dbReference type="GeneID" id="55366"/>
<dbReference type="KEGG" id="hsa:55366"/>
<dbReference type="MANE-Select" id="ENST00000379214.9">
    <property type="protein sequence ID" value="ENSP00000368516.4"/>
    <property type="RefSeq nucleotide sequence ID" value="NM_018490.5"/>
    <property type="RefSeq protein sequence ID" value="NP_060960.2"/>
</dbReference>
<dbReference type="UCSC" id="uc001mrj.5">
    <molecule id="Q9BXB1-1"/>
    <property type="organism name" value="human"/>
</dbReference>
<dbReference type="AGR" id="HGNC:13299"/>
<dbReference type="CTD" id="55366"/>
<dbReference type="DisGeNET" id="55366"/>
<dbReference type="GeneCards" id="LGR4"/>
<dbReference type="HGNC" id="HGNC:13299">
    <property type="gene designation" value="LGR4"/>
</dbReference>
<dbReference type="HPA" id="ENSG00000205213">
    <property type="expression patterns" value="Low tissue specificity"/>
</dbReference>
<dbReference type="MalaCards" id="LGR4"/>
<dbReference type="MIM" id="166710">
    <property type="type" value="phenotype"/>
</dbReference>
<dbReference type="MIM" id="606666">
    <property type="type" value="gene"/>
</dbReference>
<dbReference type="MIM" id="615311">
    <property type="type" value="phenotype"/>
</dbReference>
<dbReference type="MIM" id="619613">
    <property type="type" value="phenotype"/>
</dbReference>
<dbReference type="neXtProt" id="NX_Q9BXB1"/>
<dbReference type="OpenTargets" id="ENSG00000205213"/>
<dbReference type="PharmGKB" id="PA28893"/>
<dbReference type="VEuPathDB" id="HostDB:ENSG00000205213"/>
<dbReference type="eggNOG" id="KOG0619">
    <property type="taxonomic scope" value="Eukaryota"/>
</dbReference>
<dbReference type="eggNOG" id="KOG2087">
    <property type="taxonomic scope" value="Eukaryota"/>
</dbReference>
<dbReference type="GeneTree" id="ENSGT00940000157925"/>
<dbReference type="HOGENOM" id="CLU_006843_0_0_1"/>
<dbReference type="InParanoid" id="Q9BXB1"/>
<dbReference type="OMA" id="PPGNCSM"/>
<dbReference type="OrthoDB" id="1883493at2759"/>
<dbReference type="PAN-GO" id="Q9BXB1">
    <property type="GO annotations" value="3 GO annotations based on evolutionary models"/>
</dbReference>
<dbReference type="PhylomeDB" id="Q9BXB1"/>
<dbReference type="TreeFam" id="TF316814"/>
<dbReference type="PathwayCommons" id="Q9BXB1"/>
<dbReference type="Reactome" id="R-HSA-4641263">
    <property type="pathway name" value="Regulation of FZD by ubiquitination"/>
</dbReference>
<dbReference type="SignaLink" id="Q9BXB1"/>
<dbReference type="SIGNOR" id="Q9BXB1"/>
<dbReference type="BioGRID-ORCS" id="55366">
    <property type="hits" value="15 hits in 1161 CRISPR screens"/>
</dbReference>
<dbReference type="ChiTaRS" id="LGR4">
    <property type="organism name" value="human"/>
</dbReference>
<dbReference type="EvolutionaryTrace" id="Q9BXB1"/>
<dbReference type="GeneWiki" id="LGR4"/>
<dbReference type="GenomeRNAi" id="55366"/>
<dbReference type="Pharos" id="Q9BXB1">
    <property type="development level" value="Tbio"/>
</dbReference>
<dbReference type="PRO" id="PR:Q9BXB1"/>
<dbReference type="Proteomes" id="UP000005640">
    <property type="component" value="Chromosome 11"/>
</dbReference>
<dbReference type="RNAct" id="Q9BXB1">
    <property type="molecule type" value="protein"/>
</dbReference>
<dbReference type="Bgee" id="ENSG00000205213">
    <property type="expression patterns" value="Expressed in adrenal tissue and 200 other cell types or tissues"/>
</dbReference>
<dbReference type="ExpressionAtlas" id="Q9BXB1">
    <property type="expression patterns" value="baseline and differential"/>
</dbReference>
<dbReference type="GO" id="GO:0005886">
    <property type="term" value="C:plasma membrane"/>
    <property type="evidence" value="ECO:0000314"/>
    <property type="project" value="UniProtKB"/>
</dbReference>
<dbReference type="GO" id="GO:0004930">
    <property type="term" value="F:G protein-coupled receptor activity"/>
    <property type="evidence" value="ECO:0000304"/>
    <property type="project" value="ProtInc"/>
</dbReference>
<dbReference type="GO" id="GO:0016500">
    <property type="term" value="F:protein-hormone receptor activity"/>
    <property type="evidence" value="ECO:0007669"/>
    <property type="project" value="InterPro"/>
</dbReference>
<dbReference type="GO" id="GO:0004888">
    <property type="term" value="F:transmembrane signaling receptor activity"/>
    <property type="evidence" value="ECO:0000314"/>
    <property type="project" value="UniProtKB"/>
</dbReference>
<dbReference type="GO" id="GO:0030282">
    <property type="term" value="P:bone mineralization"/>
    <property type="evidence" value="ECO:0000250"/>
    <property type="project" value="UniProtKB"/>
</dbReference>
<dbReference type="GO" id="GO:0046849">
    <property type="term" value="P:bone remodeling"/>
    <property type="evidence" value="ECO:0000250"/>
    <property type="project" value="UniProtKB"/>
</dbReference>
<dbReference type="GO" id="GO:0032922">
    <property type="term" value="P:circadian regulation of gene expression"/>
    <property type="evidence" value="ECO:0000250"/>
    <property type="project" value="UniProtKB"/>
</dbReference>
<dbReference type="GO" id="GO:0048565">
    <property type="term" value="P:digestive tract development"/>
    <property type="evidence" value="ECO:0007669"/>
    <property type="project" value="Ensembl"/>
</dbReference>
<dbReference type="GO" id="GO:2001013">
    <property type="term" value="P:epithelial cell proliferation involved in renal tubule morphogenesis"/>
    <property type="evidence" value="ECO:0007669"/>
    <property type="project" value="Ensembl"/>
</dbReference>
<dbReference type="GO" id="GO:0001942">
    <property type="term" value="P:hair follicle development"/>
    <property type="evidence" value="ECO:0007669"/>
    <property type="project" value="Ensembl"/>
</dbReference>
<dbReference type="GO" id="GO:0045087">
    <property type="term" value="P:innate immune response"/>
    <property type="evidence" value="ECO:0007669"/>
    <property type="project" value="UniProtKB-KW"/>
</dbReference>
<dbReference type="GO" id="GO:0036335">
    <property type="term" value="P:intestinal stem cell homeostasis"/>
    <property type="evidence" value="ECO:0007669"/>
    <property type="project" value="Ensembl"/>
</dbReference>
<dbReference type="GO" id="GO:0030539">
    <property type="term" value="P:male genitalia development"/>
    <property type="evidence" value="ECO:0007669"/>
    <property type="project" value="Ensembl"/>
</dbReference>
<dbReference type="GO" id="GO:0072224">
    <property type="term" value="P:metanephric glomerulus development"/>
    <property type="evidence" value="ECO:0007669"/>
    <property type="project" value="Ensembl"/>
</dbReference>
<dbReference type="GO" id="GO:0072282">
    <property type="term" value="P:metanephric nephron tubule morphogenesis"/>
    <property type="evidence" value="ECO:0007669"/>
    <property type="project" value="Ensembl"/>
</dbReference>
<dbReference type="GO" id="GO:0120163">
    <property type="term" value="P:negative regulation of cold-induced thermogenesis"/>
    <property type="evidence" value="ECO:0000250"/>
    <property type="project" value="YuBioLab"/>
</dbReference>
<dbReference type="GO" id="GO:0001818">
    <property type="term" value="P:negative regulation of cytokine production"/>
    <property type="evidence" value="ECO:0000250"/>
    <property type="project" value="UniProtKB"/>
</dbReference>
<dbReference type="GO" id="GO:0034122">
    <property type="term" value="P:negative regulation of toll-like receptor signaling pathway"/>
    <property type="evidence" value="ECO:0000250"/>
    <property type="project" value="UniProtKB"/>
</dbReference>
<dbReference type="GO" id="GO:0001649">
    <property type="term" value="P:osteoblast differentiation"/>
    <property type="evidence" value="ECO:0000250"/>
    <property type="project" value="UniProtKB"/>
</dbReference>
<dbReference type="GO" id="GO:0090190">
    <property type="term" value="P:positive regulation of branching involved in ureteric bud morphogenesis"/>
    <property type="evidence" value="ECO:0007669"/>
    <property type="project" value="Ensembl"/>
</dbReference>
<dbReference type="GO" id="GO:0090263">
    <property type="term" value="P:positive regulation of canonical Wnt signaling pathway"/>
    <property type="evidence" value="ECO:0000314"/>
    <property type="project" value="UniProtKB"/>
</dbReference>
<dbReference type="GO" id="GO:0007283">
    <property type="term" value="P:spermatogenesis"/>
    <property type="evidence" value="ECO:0000250"/>
    <property type="project" value="UniProtKB"/>
</dbReference>
<dbReference type="GO" id="GO:0016055">
    <property type="term" value="P:Wnt signaling pathway"/>
    <property type="evidence" value="ECO:0007669"/>
    <property type="project" value="UniProtKB-KW"/>
</dbReference>
<dbReference type="CDD" id="cd15361">
    <property type="entry name" value="7tmA_LGR4"/>
    <property type="match status" value="1"/>
</dbReference>
<dbReference type="FunFam" id="1.20.1070.10:FF:000028">
    <property type="entry name" value="leucine-rich repeat-containing G-protein coupled receptor 4 isoform X1"/>
    <property type="match status" value="1"/>
</dbReference>
<dbReference type="FunFam" id="3.80.10.10:FF:000028">
    <property type="entry name" value="leucine-rich repeat-containing G-protein coupled receptor 4 isoform X1"/>
    <property type="match status" value="1"/>
</dbReference>
<dbReference type="Gene3D" id="1.20.1070.10">
    <property type="entry name" value="Rhodopsin 7-helix transmembrane proteins"/>
    <property type="match status" value="1"/>
</dbReference>
<dbReference type="Gene3D" id="3.80.10.10">
    <property type="entry name" value="Ribonuclease Inhibitor"/>
    <property type="match status" value="1"/>
</dbReference>
<dbReference type="InterPro" id="IPR000276">
    <property type="entry name" value="GPCR_Rhodpsn"/>
</dbReference>
<dbReference type="InterPro" id="IPR017452">
    <property type="entry name" value="GPCR_Rhodpsn_7TM"/>
</dbReference>
<dbReference type="InterPro" id="IPR002131">
    <property type="entry name" value="Gphrmn_rcpt_fam"/>
</dbReference>
<dbReference type="InterPro" id="IPR001611">
    <property type="entry name" value="Leu-rich_rpt"/>
</dbReference>
<dbReference type="InterPro" id="IPR003591">
    <property type="entry name" value="Leu-rich_rpt_typical-subtyp"/>
</dbReference>
<dbReference type="InterPro" id="IPR032675">
    <property type="entry name" value="LRR_dom_sf"/>
</dbReference>
<dbReference type="InterPro" id="IPR000372">
    <property type="entry name" value="LRRNT"/>
</dbReference>
<dbReference type="PANTHER" id="PTHR24372">
    <property type="entry name" value="GLYCOPROTEIN HORMONE RECEPTOR"/>
    <property type="match status" value="1"/>
</dbReference>
<dbReference type="PANTHER" id="PTHR24372:SF67">
    <property type="entry name" value="LEUCINE-RICH REPEAT-CONTAINING G-PROTEIN COUPLED RECEPTOR 4"/>
    <property type="match status" value="1"/>
</dbReference>
<dbReference type="Pfam" id="PF00001">
    <property type="entry name" value="7tm_1"/>
    <property type="match status" value="1"/>
</dbReference>
<dbReference type="Pfam" id="PF00560">
    <property type="entry name" value="LRR_1"/>
    <property type="match status" value="1"/>
</dbReference>
<dbReference type="Pfam" id="PF13855">
    <property type="entry name" value="LRR_8"/>
    <property type="match status" value="4"/>
</dbReference>
<dbReference type="Pfam" id="PF01462">
    <property type="entry name" value="LRRNT"/>
    <property type="match status" value="1"/>
</dbReference>
<dbReference type="PRINTS" id="PR00373">
    <property type="entry name" value="GLYCHORMONER"/>
</dbReference>
<dbReference type="PRINTS" id="PR00237">
    <property type="entry name" value="GPCRRHODOPSN"/>
</dbReference>
<dbReference type="SMART" id="SM00364">
    <property type="entry name" value="LRR_BAC"/>
    <property type="match status" value="10"/>
</dbReference>
<dbReference type="SMART" id="SM00365">
    <property type="entry name" value="LRR_SD22"/>
    <property type="match status" value="4"/>
</dbReference>
<dbReference type="SMART" id="SM00369">
    <property type="entry name" value="LRR_TYP"/>
    <property type="match status" value="15"/>
</dbReference>
<dbReference type="SMART" id="SM00013">
    <property type="entry name" value="LRRNT"/>
    <property type="match status" value="1"/>
</dbReference>
<dbReference type="SUPFAM" id="SSF81321">
    <property type="entry name" value="Family A G protein-coupled receptor-like"/>
    <property type="match status" value="1"/>
</dbReference>
<dbReference type="SUPFAM" id="SSF52058">
    <property type="entry name" value="L domain-like"/>
    <property type="match status" value="2"/>
</dbReference>
<dbReference type="PROSITE" id="PS50262">
    <property type="entry name" value="G_PROTEIN_RECEP_F1_2"/>
    <property type="match status" value="1"/>
</dbReference>
<dbReference type="PROSITE" id="PS51450">
    <property type="entry name" value="LRR"/>
    <property type="match status" value="15"/>
</dbReference>
<organism>
    <name type="scientific">Homo sapiens</name>
    <name type="common">Human</name>
    <dbReference type="NCBI Taxonomy" id="9606"/>
    <lineage>
        <taxon>Eukaryota</taxon>
        <taxon>Metazoa</taxon>
        <taxon>Chordata</taxon>
        <taxon>Craniata</taxon>
        <taxon>Vertebrata</taxon>
        <taxon>Euteleostomi</taxon>
        <taxon>Mammalia</taxon>
        <taxon>Eutheria</taxon>
        <taxon>Euarchontoglires</taxon>
        <taxon>Primates</taxon>
        <taxon>Haplorrhini</taxon>
        <taxon>Catarrhini</taxon>
        <taxon>Hominidae</taxon>
        <taxon>Homo</taxon>
    </lineage>
</organism>
<proteinExistence type="evidence at protein level"/>